<reference key="1">
    <citation type="journal article" date="2009" name="Genome Res.">
        <title>Complete genome of the cellulolytic thermophile Acidothermus cellulolyticus 11B provides insights into its ecophysiological and evolutionary adaptations.</title>
        <authorList>
            <person name="Barabote R.D."/>
            <person name="Xie G."/>
            <person name="Leu D.H."/>
            <person name="Normand P."/>
            <person name="Necsulea A."/>
            <person name="Daubin V."/>
            <person name="Medigue C."/>
            <person name="Adney W.S."/>
            <person name="Xu X.C."/>
            <person name="Lapidus A."/>
            <person name="Parales R.E."/>
            <person name="Detter C."/>
            <person name="Pujic P."/>
            <person name="Bruce D."/>
            <person name="Lavire C."/>
            <person name="Challacombe J.F."/>
            <person name="Brettin T.S."/>
            <person name="Berry A.M."/>
        </authorList>
    </citation>
    <scope>NUCLEOTIDE SEQUENCE [LARGE SCALE GENOMIC DNA]</scope>
    <source>
        <strain>ATCC 43068 / DSM 8971 / 11B</strain>
    </source>
</reference>
<sequence>MHTLDTVDASSLRTDIPDFRPGDTLKVHVRVVEGNRSRVQVFQGVVIRRQGSGVRETFTVRKVSFGVGVERTFPVHTPVIEKIEVVTRGHVRRAKLYYLRDLRGKAAKIREKRENRETTEA</sequence>
<name>RL19_ACIC1</name>
<keyword id="KW-1185">Reference proteome</keyword>
<keyword id="KW-0687">Ribonucleoprotein</keyword>
<keyword id="KW-0689">Ribosomal protein</keyword>
<proteinExistence type="inferred from homology"/>
<evidence type="ECO:0000255" key="1">
    <source>
        <dbReference type="HAMAP-Rule" id="MF_00402"/>
    </source>
</evidence>
<evidence type="ECO:0000305" key="2"/>
<gene>
    <name evidence="1" type="primary">rplS</name>
    <name type="ordered locus">Acel_1557</name>
</gene>
<comment type="function">
    <text evidence="1">This protein is located at the 30S-50S ribosomal subunit interface and may play a role in the structure and function of the aminoacyl-tRNA binding site.</text>
</comment>
<comment type="similarity">
    <text evidence="1">Belongs to the bacterial ribosomal protein bL19 family.</text>
</comment>
<dbReference type="EMBL" id="CP000481">
    <property type="protein sequence ID" value="ABK53329.1"/>
    <property type="molecule type" value="Genomic_DNA"/>
</dbReference>
<dbReference type="RefSeq" id="WP_011720392.1">
    <property type="nucleotide sequence ID" value="NC_008578.1"/>
</dbReference>
<dbReference type="SMR" id="A0LV69"/>
<dbReference type="FunCoup" id="A0LV69">
    <property type="interactions" value="94"/>
</dbReference>
<dbReference type="STRING" id="351607.Acel_1557"/>
<dbReference type="KEGG" id="ace:Acel_1557"/>
<dbReference type="eggNOG" id="COG0335">
    <property type="taxonomic scope" value="Bacteria"/>
</dbReference>
<dbReference type="HOGENOM" id="CLU_103507_2_1_11"/>
<dbReference type="InParanoid" id="A0LV69"/>
<dbReference type="OrthoDB" id="9803541at2"/>
<dbReference type="Proteomes" id="UP000008221">
    <property type="component" value="Chromosome"/>
</dbReference>
<dbReference type="GO" id="GO:0022625">
    <property type="term" value="C:cytosolic large ribosomal subunit"/>
    <property type="evidence" value="ECO:0007669"/>
    <property type="project" value="TreeGrafter"/>
</dbReference>
<dbReference type="GO" id="GO:0003735">
    <property type="term" value="F:structural constituent of ribosome"/>
    <property type="evidence" value="ECO:0007669"/>
    <property type="project" value="InterPro"/>
</dbReference>
<dbReference type="GO" id="GO:0006412">
    <property type="term" value="P:translation"/>
    <property type="evidence" value="ECO:0007669"/>
    <property type="project" value="UniProtKB-UniRule"/>
</dbReference>
<dbReference type="FunFam" id="2.30.30.790:FF:000001">
    <property type="entry name" value="50S ribosomal protein L19"/>
    <property type="match status" value="1"/>
</dbReference>
<dbReference type="Gene3D" id="2.30.30.790">
    <property type="match status" value="1"/>
</dbReference>
<dbReference type="HAMAP" id="MF_00402">
    <property type="entry name" value="Ribosomal_bL19"/>
    <property type="match status" value="1"/>
</dbReference>
<dbReference type="InterPro" id="IPR001857">
    <property type="entry name" value="Ribosomal_bL19"/>
</dbReference>
<dbReference type="InterPro" id="IPR018257">
    <property type="entry name" value="Ribosomal_bL19_CS"/>
</dbReference>
<dbReference type="InterPro" id="IPR038657">
    <property type="entry name" value="Ribosomal_bL19_sf"/>
</dbReference>
<dbReference type="InterPro" id="IPR008991">
    <property type="entry name" value="Translation_prot_SH3-like_sf"/>
</dbReference>
<dbReference type="NCBIfam" id="TIGR01024">
    <property type="entry name" value="rplS_bact"/>
    <property type="match status" value="1"/>
</dbReference>
<dbReference type="PANTHER" id="PTHR15680:SF9">
    <property type="entry name" value="LARGE RIBOSOMAL SUBUNIT PROTEIN BL19M"/>
    <property type="match status" value="1"/>
</dbReference>
<dbReference type="PANTHER" id="PTHR15680">
    <property type="entry name" value="RIBOSOMAL PROTEIN L19"/>
    <property type="match status" value="1"/>
</dbReference>
<dbReference type="Pfam" id="PF01245">
    <property type="entry name" value="Ribosomal_L19"/>
    <property type="match status" value="1"/>
</dbReference>
<dbReference type="PIRSF" id="PIRSF002191">
    <property type="entry name" value="Ribosomal_L19"/>
    <property type="match status" value="1"/>
</dbReference>
<dbReference type="PRINTS" id="PR00061">
    <property type="entry name" value="RIBOSOMALL19"/>
</dbReference>
<dbReference type="SUPFAM" id="SSF50104">
    <property type="entry name" value="Translation proteins SH3-like domain"/>
    <property type="match status" value="1"/>
</dbReference>
<dbReference type="PROSITE" id="PS01015">
    <property type="entry name" value="RIBOSOMAL_L19"/>
    <property type="match status" value="1"/>
</dbReference>
<feature type="chain" id="PRO_1000049625" description="Large ribosomal subunit protein bL19">
    <location>
        <begin position="1"/>
        <end position="121"/>
    </location>
</feature>
<protein>
    <recommendedName>
        <fullName evidence="1">Large ribosomal subunit protein bL19</fullName>
    </recommendedName>
    <alternativeName>
        <fullName evidence="2">50S ribosomal protein L19</fullName>
    </alternativeName>
</protein>
<organism>
    <name type="scientific">Acidothermus cellulolyticus (strain ATCC 43068 / DSM 8971 / 11B)</name>
    <dbReference type="NCBI Taxonomy" id="351607"/>
    <lineage>
        <taxon>Bacteria</taxon>
        <taxon>Bacillati</taxon>
        <taxon>Actinomycetota</taxon>
        <taxon>Actinomycetes</taxon>
        <taxon>Acidothermales</taxon>
        <taxon>Acidothermaceae</taxon>
        <taxon>Acidothermus</taxon>
    </lineage>
</organism>
<accession>A0LV69</accession>